<organism>
    <name type="scientific">Buchnera aphidicola subsp. Baizongia pistaciae (strain Bp)</name>
    <dbReference type="NCBI Taxonomy" id="224915"/>
    <lineage>
        <taxon>Bacteria</taxon>
        <taxon>Pseudomonadati</taxon>
        <taxon>Pseudomonadota</taxon>
        <taxon>Gammaproteobacteria</taxon>
        <taxon>Enterobacterales</taxon>
        <taxon>Erwiniaceae</taxon>
        <taxon>Buchnera</taxon>
    </lineage>
</organism>
<proteinExistence type="inferred from homology"/>
<dbReference type="EMBL" id="AE016826">
    <property type="protein sequence ID" value="AAO27152.1"/>
    <property type="molecule type" value="Genomic_DNA"/>
</dbReference>
<dbReference type="RefSeq" id="WP_011091553.1">
    <property type="nucleotide sequence ID" value="NC_004545.1"/>
</dbReference>
<dbReference type="SMR" id="Q89A86"/>
<dbReference type="STRING" id="224915.bbp_446"/>
<dbReference type="KEGG" id="bab:bbp_446"/>
<dbReference type="eggNOG" id="COG0257">
    <property type="taxonomic scope" value="Bacteria"/>
</dbReference>
<dbReference type="HOGENOM" id="CLU_135723_6_2_6"/>
<dbReference type="OrthoDB" id="9802520at2"/>
<dbReference type="Proteomes" id="UP000000601">
    <property type="component" value="Chromosome"/>
</dbReference>
<dbReference type="GO" id="GO:0005737">
    <property type="term" value="C:cytoplasm"/>
    <property type="evidence" value="ECO:0007669"/>
    <property type="project" value="UniProtKB-ARBA"/>
</dbReference>
<dbReference type="GO" id="GO:1990904">
    <property type="term" value="C:ribonucleoprotein complex"/>
    <property type="evidence" value="ECO:0007669"/>
    <property type="project" value="UniProtKB-KW"/>
</dbReference>
<dbReference type="GO" id="GO:0005840">
    <property type="term" value="C:ribosome"/>
    <property type="evidence" value="ECO:0007669"/>
    <property type="project" value="UniProtKB-KW"/>
</dbReference>
<dbReference type="GO" id="GO:0003735">
    <property type="term" value="F:structural constituent of ribosome"/>
    <property type="evidence" value="ECO:0007669"/>
    <property type="project" value="InterPro"/>
</dbReference>
<dbReference type="GO" id="GO:0006412">
    <property type="term" value="P:translation"/>
    <property type="evidence" value="ECO:0007669"/>
    <property type="project" value="UniProtKB-UniRule"/>
</dbReference>
<dbReference type="HAMAP" id="MF_00251">
    <property type="entry name" value="Ribosomal_bL36"/>
    <property type="match status" value="1"/>
</dbReference>
<dbReference type="InterPro" id="IPR000473">
    <property type="entry name" value="Ribosomal_bL36"/>
</dbReference>
<dbReference type="InterPro" id="IPR035977">
    <property type="entry name" value="Ribosomal_bL36_sp"/>
</dbReference>
<dbReference type="NCBIfam" id="TIGR01022">
    <property type="entry name" value="rpmJ_bact"/>
    <property type="match status" value="1"/>
</dbReference>
<dbReference type="PANTHER" id="PTHR42888">
    <property type="entry name" value="50S RIBOSOMAL PROTEIN L36, CHLOROPLASTIC"/>
    <property type="match status" value="1"/>
</dbReference>
<dbReference type="PANTHER" id="PTHR42888:SF1">
    <property type="entry name" value="LARGE RIBOSOMAL SUBUNIT PROTEIN BL36C"/>
    <property type="match status" value="1"/>
</dbReference>
<dbReference type="Pfam" id="PF00444">
    <property type="entry name" value="Ribosomal_L36"/>
    <property type="match status" value="1"/>
</dbReference>
<dbReference type="SUPFAM" id="SSF57840">
    <property type="entry name" value="Ribosomal protein L36"/>
    <property type="match status" value="1"/>
</dbReference>
<dbReference type="PROSITE" id="PS00828">
    <property type="entry name" value="RIBOSOMAL_L36"/>
    <property type="match status" value="1"/>
</dbReference>
<reference key="1">
    <citation type="journal article" date="2003" name="Proc. Natl. Acad. Sci. U.S.A.">
        <title>Reductive genome evolution in Buchnera aphidicola.</title>
        <authorList>
            <person name="van Ham R.C.H.J."/>
            <person name="Kamerbeek J."/>
            <person name="Palacios C."/>
            <person name="Rausell C."/>
            <person name="Abascal F."/>
            <person name="Bastolla U."/>
            <person name="Fernandez J.M."/>
            <person name="Jimenez L."/>
            <person name="Postigo M."/>
            <person name="Silva F.J."/>
            <person name="Tamames J."/>
            <person name="Viguera E."/>
            <person name="Latorre A."/>
            <person name="Valencia A."/>
            <person name="Moran F."/>
            <person name="Moya A."/>
        </authorList>
    </citation>
    <scope>NUCLEOTIDE SEQUENCE [LARGE SCALE GENOMIC DNA]</scope>
    <source>
        <strain>Bp</strain>
    </source>
</reference>
<gene>
    <name evidence="1" type="primary">rpmJ</name>
    <name type="ordered locus">bbp_446</name>
</gene>
<keyword id="KW-1185">Reference proteome</keyword>
<keyword id="KW-0687">Ribonucleoprotein</keyword>
<keyword id="KW-0689">Ribosomal protein</keyword>
<accession>Q89A86</accession>
<comment type="similarity">
    <text evidence="1">Belongs to the bacterial ribosomal protein bL36 family.</text>
</comment>
<name>RL36_BUCBP</name>
<feature type="chain" id="PRO_0000126163" description="Large ribosomal subunit protein bL36">
    <location>
        <begin position="1"/>
        <end position="38"/>
    </location>
</feature>
<protein>
    <recommendedName>
        <fullName evidence="1">Large ribosomal subunit protein bL36</fullName>
    </recommendedName>
    <alternativeName>
        <fullName evidence="2">50S ribosomal protein L36</fullName>
    </alternativeName>
</protein>
<evidence type="ECO:0000255" key="1">
    <source>
        <dbReference type="HAMAP-Rule" id="MF_00251"/>
    </source>
</evidence>
<evidence type="ECO:0000305" key="2"/>
<sequence>MKVRTSVKKLCRNCKIVRRYNVVRVICKSEPKHKQRQG</sequence>